<sequence length="561" mass="60181">MNINVADLLNGNYILLLFVVLALGLCLGKLRLGSVQLGNSIGVLVVSLLLGQQHFSINTDALNLGFMLFIFCVGVEAGPNFFSIFFRDGKNYLMLALVMVGSALLIALGLGKLFGWDIGLTAGMLAGSMTSTPVLVGAGDTLRHSGIASTQLSSALDNLSLGYALTYLIGLVSLIVGARYLPKLQHQDLQTSAQQIARERGLDTDANRKVYLPVIRAYRVGPELVAWTDGKNLRELGIYRQTGCYIERIRRNGILANPDGDAVLQMGDEIALVGYPDAHARLDPSFRNGKEVFDRDLLDMRIVTEEIVVKNHNAVGRRLAQLKLTDHGCFLNRVIRSQIEMPIDDNVVLNKGDVLQVSGDARRVKTIADRIGFISIHSQVTDLLAFCAFFIIGLMIGMITFQFSNFSFGIGNAAGLLFAGIMLGFLRANHPTFGYIPQGALNMVKEFGLMVFMAGVGLSAGSGISNGLGAVGGQMLIAGLVVSLVPVVICFLFGAYVLRMNRALLFGAMMGARTCAPAMEIISDTARSNIPALGYAGTYAIANVLLTLAGTLIVIIWPGLG</sequence>
<evidence type="ECO:0000255" key="1">
    <source>
        <dbReference type="HAMAP-Rule" id="MF_01015"/>
    </source>
</evidence>
<evidence type="ECO:0000305" key="2"/>
<proteinExistence type="inferred from homology"/>
<keyword id="KW-1003">Cell membrane</keyword>
<keyword id="KW-0472">Membrane</keyword>
<keyword id="KW-1185">Reference proteome</keyword>
<keyword id="KW-0677">Repeat</keyword>
<keyword id="KW-0812">Transmembrane</keyword>
<keyword id="KW-1133">Transmembrane helix</keyword>
<keyword id="KW-0813">Transport</keyword>
<accession>Q8ZQK4</accession>
<accession>Q9Z5Z4</accession>
<gene>
    <name evidence="1" type="primary">ybjL</name>
    <name type="ordered locus">STM0870</name>
</gene>
<feature type="chain" id="PRO_0000208789" description="Putative transport protein YbjL">
    <location>
        <begin position="1"/>
        <end position="561"/>
    </location>
</feature>
<feature type="transmembrane region" description="Helical" evidence="1">
    <location>
        <begin position="8"/>
        <end position="28"/>
    </location>
</feature>
<feature type="transmembrane region" description="Helical" evidence="1">
    <location>
        <begin position="32"/>
        <end position="52"/>
    </location>
</feature>
<feature type="transmembrane region" description="Helical" evidence="1">
    <location>
        <begin position="66"/>
        <end position="86"/>
    </location>
</feature>
<feature type="transmembrane region" description="Helical" evidence="1">
    <location>
        <begin position="94"/>
        <end position="114"/>
    </location>
</feature>
<feature type="transmembrane region" description="Helical" evidence="1">
    <location>
        <begin position="158"/>
        <end position="178"/>
    </location>
</feature>
<feature type="transmembrane region" description="Helical" evidence="1">
    <location>
        <begin position="383"/>
        <end position="403"/>
    </location>
</feature>
<feature type="transmembrane region" description="Helical" evidence="1">
    <location>
        <begin position="406"/>
        <end position="426"/>
    </location>
</feature>
<feature type="transmembrane region" description="Helical" evidence="1">
    <location>
        <begin position="447"/>
        <end position="467"/>
    </location>
</feature>
<feature type="transmembrane region" description="Helical" evidence="1">
    <location>
        <begin position="475"/>
        <end position="495"/>
    </location>
</feature>
<feature type="transmembrane region" description="Helical" evidence="1">
    <location>
        <begin position="540"/>
        <end position="560"/>
    </location>
</feature>
<feature type="domain" description="RCK C-terminal 1" evidence="1">
    <location>
        <begin position="200"/>
        <end position="288"/>
    </location>
</feature>
<feature type="domain" description="RCK C-terminal 2" evidence="1">
    <location>
        <begin position="292"/>
        <end position="373"/>
    </location>
</feature>
<feature type="sequence conflict" description="In Ref. 2; AAD18025." evidence="2" ref="2">
    <location>
        <position position="119"/>
    </location>
</feature>
<feature type="sequence conflict" description="In Ref. 2; AAD18025." evidence="2" ref="2">
    <original>IA</original>
    <variation>NC</variation>
    <location>
        <begin position="196"/>
        <end position="197"/>
    </location>
</feature>
<organism>
    <name type="scientific">Salmonella typhimurium (strain LT2 / SGSC1412 / ATCC 700720)</name>
    <dbReference type="NCBI Taxonomy" id="99287"/>
    <lineage>
        <taxon>Bacteria</taxon>
        <taxon>Pseudomonadati</taxon>
        <taxon>Pseudomonadota</taxon>
        <taxon>Gammaproteobacteria</taxon>
        <taxon>Enterobacterales</taxon>
        <taxon>Enterobacteriaceae</taxon>
        <taxon>Salmonella</taxon>
    </lineage>
</organism>
<dbReference type="EMBL" id="AE006468">
    <property type="protein sequence ID" value="AAL19806.1"/>
    <property type="molecule type" value="Genomic_DNA"/>
</dbReference>
<dbReference type="EMBL" id="AF117952">
    <property type="protein sequence ID" value="AAD18025.1"/>
    <property type="molecule type" value="Genomic_DNA"/>
</dbReference>
<dbReference type="RefSeq" id="NP_459847.1">
    <property type="nucleotide sequence ID" value="NC_003197.2"/>
</dbReference>
<dbReference type="RefSeq" id="WP_001024853.1">
    <property type="nucleotide sequence ID" value="NC_003197.2"/>
</dbReference>
<dbReference type="SMR" id="Q8ZQK4"/>
<dbReference type="STRING" id="99287.STM0870"/>
<dbReference type="PaxDb" id="99287-STM0870"/>
<dbReference type="GeneID" id="1252389"/>
<dbReference type="KEGG" id="stm:STM0870"/>
<dbReference type="PATRIC" id="fig|99287.12.peg.909"/>
<dbReference type="HOGENOM" id="CLU_035023_2_2_6"/>
<dbReference type="OMA" id="IHSQMAD"/>
<dbReference type="PhylomeDB" id="Q8ZQK4"/>
<dbReference type="BioCyc" id="SENT99287:STM0870-MONOMER"/>
<dbReference type="Proteomes" id="UP000001014">
    <property type="component" value="Chromosome"/>
</dbReference>
<dbReference type="GO" id="GO:0005886">
    <property type="term" value="C:plasma membrane"/>
    <property type="evidence" value="ECO:0000318"/>
    <property type="project" value="GO_Central"/>
</dbReference>
<dbReference type="GO" id="GO:0008324">
    <property type="term" value="F:monoatomic cation transmembrane transporter activity"/>
    <property type="evidence" value="ECO:0007669"/>
    <property type="project" value="InterPro"/>
</dbReference>
<dbReference type="GO" id="GO:0006813">
    <property type="term" value="P:potassium ion transport"/>
    <property type="evidence" value="ECO:0007669"/>
    <property type="project" value="InterPro"/>
</dbReference>
<dbReference type="FunFam" id="3.30.70.1450:FF:000003">
    <property type="entry name" value="Putative transport protein YbjL"/>
    <property type="match status" value="1"/>
</dbReference>
<dbReference type="Gene3D" id="3.30.70.1450">
    <property type="entry name" value="Regulator of K+ conductance, C-terminal domain"/>
    <property type="match status" value="1"/>
</dbReference>
<dbReference type="HAMAP" id="MF_01015">
    <property type="entry name" value="YbjL"/>
    <property type="match status" value="1"/>
</dbReference>
<dbReference type="InterPro" id="IPR050144">
    <property type="entry name" value="AAE_transporter"/>
</dbReference>
<dbReference type="InterPro" id="IPR006037">
    <property type="entry name" value="RCK_C"/>
</dbReference>
<dbReference type="InterPro" id="IPR036721">
    <property type="entry name" value="RCK_C_sf"/>
</dbReference>
<dbReference type="InterPro" id="IPR023017">
    <property type="entry name" value="Transp_YbjL_put"/>
</dbReference>
<dbReference type="InterPro" id="IPR006512">
    <property type="entry name" value="YidE_YbjL"/>
</dbReference>
<dbReference type="NCBIfam" id="NF003440">
    <property type="entry name" value="PRK04972.1"/>
    <property type="match status" value="1"/>
</dbReference>
<dbReference type="NCBIfam" id="TIGR01625">
    <property type="entry name" value="YidE_YbjL_dupl"/>
    <property type="match status" value="2"/>
</dbReference>
<dbReference type="PANTHER" id="PTHR30445">
    <property type="entry name" value="K(+)_H(+) ANTIPORTER SUBUNIT KHTT"/>
    <property type="match status" value="1"/>
</dbReference>
<dbReference type="PANTHER" id="PTHR30445:SF10">
    <property type="entry name" value="TRANSPORT PROTEIN YBJL-RELATED"/>
    <property type="match status" value="1"/>
</dbReference>
<dbReference type="Pfam" id="PF06826">
    <property type="entry name" value="Asp-Al_Ex"/>
    <property type="match status" value="2"/>
</dbReference>
<dbReference type="Pfam" id="PF02080">
    <property type="entry name" value="TrkA_C"/>
    <property type="match status" value="2"/>
</dbReference>
<dbReference type="SUPFAM" id="SSF116726">
    <property type="entry name" value="TrkA C-terminal domain-like"/>
    <property type="match status" value="2"/>
</dbReference>
<dbReference type="PROSITE" id="PS51202">
    <property type="entry name" value="RCK_C"/>
    <property type="match status" value="2"/>
</dbReference>
<protein>
    <recommendedName>
        <fullName evidence="1">Putative transport protein YbjL</fullName>
    </recommendedName>
</protein>
<reference key="1">
    <citation type="journal article" date="2001" name="Nature">
        <title>Complete genome sequence of Salmonella enterica serovar Typhimurium LT2.</title>
        <authorList>
            <person name="McClelland M."/>
            <person name="Sanderson K.E."/>
            <person name="Spieth J."/>
            <person name="Clifton S.W."/>
            <person name="Latreille P."/>
            <person name="Courtney L."/>
            <person name="Porwollik S."/>
            <person name="Ali J."/>
            <person name="Dante M."/>
            <person name="Du F."/>
            <person name="Hou S."/>
            <person name="Layman D."/>
            <person name="Leonard S."/>
            <person name="Nguyen C."/>
            <person name="Scott K."/>
            <person name="Holmes A."/>
            <person name="Grewal N."/>
            <person name="Mulvaney E."/>
            <person name="Ryan E."/>
            <person name="Sun H."/>
            <person name="Florea L."/>
            <person name="Miller W."/>
            <person name="Stoneking T."/>
            <person name="Nhan M."/>
            <person name="Waterston R."/>
            <person name="Wilson R.K."/>
        </authorList>
    </citation>
    <scope>NUCLEOTIDE SEQUENCE [LARGE SCALE GENOMIC DNA]</scope>
    <source>
        <strain>LT2 / SGSC1412 / ATCC 700720</strain>
    </source>
</reference>
<reference key="2">
    <citation type="submission" date="1999-01" db="EMBL/GenBank/DDBJ databases">
        <title>Cloning and characterization of the major nitrotreductase from Salmonella typhimurium TA1535.</title>
        <authorList>
            <person name="Lambert I.B."/>
            <person name="Boroumandi S."/>
            <person name="Nokhbeh M.R."/>
            <person name="Pokorny N.S."/>
            <person name="Koziarz P."/>
        </authorList>
    </citation>
    <scope>NUCLEOTIDE SEQUENCE [GENOMIC DNA] OF 1-462</scope>
    <source>
        <strain>ATCC 29629 / TA 1535</strain>
    </source>
</reference>
<name>YBJL_SALTY</name>
<comment type="subcellular location">
    <subcellularLocation>
        <location evidence="1">Cell membrane</location>
        <topology evidence="1">Multi-pass membrane protein</topology>
    </subcellularLocation>
</comment>
<comment type="similarity">
    <text evidence="1">Belongs to the AAE transporter (TC 2.A.81) family. YbjL subfamily.</text>
</comment>